<organism>
    <name type="scientific">Gallus gallus</name>
    <name type="common">Chicken</name>
    <dbReference type="NCBI Taxonomy" id="9031"/>
    <lineage>
        <taxon>Eukaryota</taxon>
        <taxon>Metazoa</taxon>
        <taxon>Chordata</taxon>
        <taxon>Craniata</taxon>
        <taxon>Vertebrata</taxon>
        <taxon>Euteleostomi</taxon>
        <taxon>Archelosauria</taxon>
        <taxon>Archosauria</taxon>
        <taxon>Dinosauria</taxon>
        <taxon>Saurischia</taxon>
        <taxon>Theropoda</taxon>
        <taxon>Coelurosauria</taxon>
        <taxon>Aves</taxon>
        <taxon>Neognathae</taxon>
        <taxon>Galloanserae</taxon>
        <taxon>Galliformes</taxon>
        <taxon>Phasianidae</taxon>
        <taxon>Phasianinae</taxon>
        <taxon>Gallus</taxon>
    </lineage>
</organism>
<keyword id="KW-0050">Antiport</keyword>
<keyword id="KW-0106">Calcium</keyword>
<keyword id="KW-0109">Calcium transport</keyword>
<keyword id="KW-1003">Cell membrane</keyword>
<keyword id="KW-0325">Glycoprotein</keyword>
<keyword id="KW-0406">Ion transport</keyword>
<keyword id="KW-0472">Membrane</keyword>
<keyword id="KW-0597">Phosphoprotein</keyword>
<keyword id="KW-0630">Potassium</keyword>
<keyword id="KW-0633">Potassium transport</keyword>
<keyword id="KW-1185">Reference proteome</keyword>
<keyword id="KW-0677">Repeat</keyword>
<keyword id="KW-0716">Sensory transduction</keyword>
<keyword id="KW-0732">Signal</keyword>
<keyword id="KW-0915">Sodium</keyword>
<keyword id="KW-0739">Sodium transport</keyword>
<keyword id="KW-0769">Symport</keyword>
<keyword id="KW-0812">Transmembrane</keyword>
<keyword id="KW-1133">Transmembrane helix</keyword>
<keyword id="KW-0813">Transport</keyword>
<keyword id="KW-0844">Vision</keyword>
<reference key="1">
    <citation type="journal article" date="2000" name="J. Neurosci.">
        <title>Molecular cloning and functional expression of the potassium-dependent sodium-calcium exchanger from human and chicken retinal cone photoreceptors.</title>
        <authorList>
            <person name="Prinsen C.F.M."/>
            <person name="Szerencsei R.T."/>
            <person name="Schnetkamp P.P.M."/>
        </authorList>
    </citation>
    <scope>NUCLEOTIDE SEQUENCE [MRNA]</scope>
    <scope>FUNCTION</scope>
    <scope>TRANSPORTER ACTIVITY</scope>
    <source>
        <tissue>Retina</tissue>
    </source>
</reference>
<comment type="function">
    <text evidence="1 5">Calcium, potassium:sodium antiporter that transports 1 Ca(2+) and 1 K(+) in exchange for 4 Na(+) (PubMed:10662833). Critical component of the visual transduction cascade, controlling the calcium concentration of outer segments during light and darkness. Light causes a rapid lowering of cytosolic free calcium in the outer segment of both retinal rod and cone photoreceptors and the light-induced lowering of calcium is caused by extrusion via this protein which plays a key role in the process of light adaptation (By similarity).</text>
</comment>
<comment type="catalytic activity">
    <reaction evidence="7">
        <text>Ca(2+)(out) + K(+)(out) + 4 Na(+)(in) = Ca(2+)(in) + K(+)(in) + 4 Na(+)(out)</text>
        <dbReference type="Rhea" id="RHEA:69967"/>
        <dbReference type="ChEBI" id="CHEBI:29101"/>
        <dbReference type="ChEBI" id="CHEBI:29103"/>
        <dbReference type="ChEBI" id="CHEBI:29108"/>
    </reaction>
</comment>
<comment type="subcellular location">
    <subcellularLocation>
        <location evidence="2">Cell membrane</location>
        <topology evidence="3">Multi-pass membrane protein</topology>
    </subcellularLocation>
</comment>
<comment type="tissue specificity">
    <text evidence="5">Retinal rods. Localizes to the inner segment of rod photoreceptors.</text>
</comment>
<comment type="PTM">
    <text evidence="2">The uncleaved signal sequence is required for efficient membrane targeting and proper membrane integration and topology.</text>
</comment>
<comment type="similarity">
    <text evidence="6">Belongs to the Ca(2+):cation antiporter (CaCA) (TC 2.A.19) family. SLC24A subfamily.</text>
</comment>
<sequence>MHLPRRRRLQRNRIFFFLAVVSLLSVYQLQFSPSAIPALLTAHQHEDPVKVTSREPFRNKTSKTGNVTAAPKIRHCVYIDPEPTVPITASEDTTQRENVNESYPDEKPVYESKGEYPQDLFSVEERRQGWVVLHIFGMMYVFVALAIVCDEYFVPALGVITEKLQISEDVAGATFMAAGGSAPELFTSLIGVFISHSNVGIGTIVGSAVFNILFVIGTCALFSREILHLTWWPLFRDISFYIVDLLMLILFFLDSVIDWWESLLLLTAYATYVFTMKHNVSLEQWVKEELSKKLNAVQAASAEHMRKKSSVAVAEDGTKPADGKKLQPTTALQRGTSSASLHNSQMRSTIFQLMIHTLDPLAGAKFKDRVDILSNIAKVKADSLTGQGTKPEAEEEKQASQNTVQVTPASDSEPSKDKQKEDTPQDGQPPSDSDNSEDSSSDSEDDSDDDSTDDEENDEPLSLEWPETRKKQAIYLFLFPIVFPLWSTIPDVRNPDSKKFFVITFFGSIIWIAAFSYLMVWWAHQVGETIGISEEIMGLTILAAGTSIPDLITSVIVARKGLGDMAVSSSVGSNIFDITVGLPVPWFLYSVFNGFSPVAVSSNGLFCAIVLLFLMLLFVIISIALCKWKMNKILGVTMFALYFVFLIISVMLEDRIISCPVSV</sequence>
<proteinExistence type="evidence at transcript level"/>
<gene>
    <name type="primary">SLC24A1</name>
    <name type="synonym">NCKX1</name>
</gene>
<evidence type="ECO:0000250" key="1">
    <source>
        <dbReference type="UniProtKB" id="O60721"/>
    </source>
</evidence>
<evidence type="ECO:0000250" key="2">
    <source>
        <dbReference type="UniProtKB" id="Q28139"/>
    </source>
</evidence>
<evidence type="ECO:0000255" key="3"/>
<evidence type="ECO:0000256" key="4">
    <source>
        <dbReference type="SAM" id="MobiDB-lite"/>
    </source>
</evidence>
<evidence type="ECO:0000269" key="5">
    <source>
    </source>
</evidence>
<evidence type="ECO:0000305" key="6"/>
<evidence type="ECO:0000305" key="7">
    <source>
    </source>
</evidence>
<feature type="chain" id="PRO_0000019366" description="Sodium/potassium/calcium exchanger 1">
    <location>
        <begin position="1"/>
        <end position="663"/>
    </location>
</feature>
<feature type="signal peptide" description="Not cleaved" evidence="2">
    <location>
        <begin position="1"/>
        <end status="unknown"/>
    </location>
</feature>
<feature type="topological domain" description="Extracellular" evidence="3">
    <location>
        <begin position="32"/>
        <end position="128"/>
    </location>
</feature>
<feature type="transmembrane region" description="Helical" evidence="3">
    <location>
        <begin position="129"/>
        <end position="149"/>
    </location>
</feature>
<feature type="topological domain" description="Cytoplasmic" evidence="3">
    <location>
        <begin position="150"/>
        <end position="173"/>
    </location>
</feature>
<feature type="transmembrane region" description="Helical" evidence="3">
    <location>
        <begin position="174"/>
        <end position="194"/>
    </location>
</feature>
<feature type="topological domain" description="Extracellular" evidence="3">
    <location>
        <begin position="195"/>
        <end position="200"/>
    </location>
</feature>
<feature type="transmembrane region" description="Helical" evidence="3">
    <location>
        <begin position="201"/>
        <end position="221"/>
    </location>
</feature>
<feature type="topological domain" description="Cytoplasmic" evidence="3">
    <location>
        <begin position="222"/>
        <end position="228"/>
    </location>
</feature>
<feature type="transmembrane region" description="Helical" evidence="3">
    <location>
        <begin position="229"/>
        <end position="253"/>
    </location>
</feature>
<feature type="topological domain" description="Extracellular" evidence="3">
    <location>
        <begin position="254"/>
        <end position="259"/>
    </location>
</feature>
<feature type="transmembrane region" description="Helical" evidence="3">
    <location>
        <begin position="260"/>
        <end position="276"/>
    </location>
</feature>
<feature type="topological domain" description="Cytoplasmic" evidence="3">
    <location>
        <begin position="277"/>
        <end position="471"/>
    </location>
</feature>
<feature type="transmembrane region" description="Helical" evidence="3">
    <location>
        <begin position="472"/>
        <end position="492"/>
    </location>
</feature>
<feature type="topological domain" description="Extracellular" evidence="3">
    <location>
        <begin position="493"/>
        <end position="499"/>
    </location>
</feature>
<feature type="transmembrane region" description="Helical" evidence="3">
    <location>
        <begin position="500"/>
        <end position="520"/>
    </location>
</feature>
<feature type="topological domain" description="Cytoplasmic" evidence="3">
    <location>
        <begin position="521"/>
        <end position="535"/>
    </location>
</feature>
<feature type="transmembrane region" description="Helical" evidence="3">
    <location>
        <begin position="536"/>
        <end position="556"/>
    </location>
</feature>
<feature type="topological domain" description="Extracellular" evidence="3">
    <location>
        <begin position="557"/>
        <end position="574"/>
    </location>
</feature>
<feature type="transmembrane region" description="Helical" evidence="3">
    <location>
        <begin position="575"/>
        <end position="595"/>
    </location>
</feature>
<feature type="topological domain" description="Cytoplasmic" evidence="3">
    <location>
        <begin position="596"/>
        <end position="604"/>
    </location>
</feature>
<feature type="transmembrane region" description="Helical" evidence="3">
    <location>
        <begin position="605"/>
        <end position="625"/>
    </location>
</feature>
<feature type="topological domain" description="Extracellular" evidence="3">
    <location>
        <begin position="626"/>
        <end position="632"/>
    </location>
</feature>
<feature type="transmembrane region" description="Helical" evidence="3">
    <location>
        <begin position="633"/>
        <end position="653"/>
    </location>
</feature>
<feature type="topological domain" description="Cytoplasmic" evidence="3">
    <location>
        <begin position="654"/>
        <end position="663"/>
    </location>
</feature>
<feature type="repeat" description="Alpha-1">
    <location>
        <begin position="170"/>
        <end position="210"/>
    </location>
</feature>
<feature type="repeat" description="Alpha-2">
    <location>
        <begin position="543"/>
        <end position="574"/>
    </location>
</feature>
<feature type="region of interest" description="Disordered" evidence="4">
    <location>
        <begin position="308"/>
        <end position="343"/>
    </location>
</feature>
<feature type="region of interest" description="Disordered" evidence="4">
    <location>
        <begin position="384"/>
        <end position="465"/>
    </location>
</feature>
<feature type="compositionally biased region" description="Basic and acidic residues" evidence="4">
    <location>
        <begin position="316"/>
        <end position="325"/>
    </location>
</feature>
<feature type="compositionally biased region" description="Polar residues" evidence="4">
    <location>
        <begin position="327"/>
        <end position="343"/>
    </location>
</feature>
<feature type="compositionally biased region" description="Polar residues" evidence="4">
    <location>
        <begin position="399"/>
        <end position="412"/>
    </location>
</feature>
<feature type="compositionally biased region" description="Basic and acidic residues" evidence="4">
    <location>
        <begin position="413"/>
        <end position="423"/>
    </location>
</feature>
<feature type="compositionally biased region" description="Acidic residues" evidence="4">
    <location>
        <begin position="434"/>
        <end position="461"/>
    </location>
</feature>
<feature type="modified residue" description="Phosphoserine" evidence="3">
    <location>
        <position position="337"/>
    </location>
</feature>
<feature type="glycosylation site" description="N-linked (GlcNAc...) asparagine" evidence="3">
    <location>
        <position position="59"/>
    </location>
</feature>
<feature type="glycosylation site" description="N-linked (GlcNAc...) asparagine" evidence="3">
    <location>
        <position position="66"/>
    </location>
</feature>
<feature type="glycosylation site" description="N-linked (GlcNAc...) asparagine" evidence="3">
    <location>
        <position position="100"/>
    </location>
</feature>
<name>NCKX1_CHICK</name>
<dbReference type="EMBL" id="AF177984">
    <property type="protein sequence ID" value="AAF25808.1"/>
    <property type="molecule type" value="mRNA"/>
</dbReference>
<dbReference type="RefSeq" id="NP_001001773.1">
    <property type="nucleotide sequence ID" value="NM_001001773.1"/>
</dbReference>
<dbReference type="SMR" id="Q9IAL8"/>
<dbReference type="FunCoup" id="Q9IAL8">
    <property type="interactions" value="448"/>
</dbReference>
<dbReference type="STRING" id="9031.ENSGALP00000012102"/>
<dbReference type="GlyCosmos" id="Q9IAL8">
    <property type="glycosylation" value="3 sites, No reported glycans"/>
</dbReference>
<dbReference type="GlyGen" id="Q9IAL8">
    <property type="glycosylation" value="5 sites"/>
</dbReference>
<dbReference type="PaxDb" id="9031-ENSGALP00000012102"/>
<dbReference type="GeneID" id="414892"/>
<dbReference type="KEGG" id="gga:414892"/>
<dbReference type="CTD" id="9187"/>
<dbReference type="VEuPathDB" id="HostDB:geneid_414892"/>
<dbReference type="eggNOG" id="KOG1307">
    <property type="taxonomic scope" value="Eukaryota"/>
</dbReference>
<dbReference type="InParanoid" id="Q9IAL8"/>
<dbReference type="OrthoDB" id="2127281at2759"/>
<dbReference type="PhylomeDB" id="Q9IAL8"/>
<dbReference type="PRO" id="PR:Q9IAL8"/>
<dbReference type="Proteomes" id="UP000000539">
    <property type="component" value="Unassembled WGS sequence"/>
</dbReference>
<dbReference type="GO" id="GO:0043025">
    <property type="term" value="C:neuronal cell body"/>
    <property type="evidence" value="ECO:0000314"/>
    <property type="project" value="ARUK-UCL"/>
</dbReference>
<dbReference type="GO" id="GO:0005886">
    <property type="term" value="C:plasma membrane"/>
    <property type="evidence" value="ECO:0000318"/>
    <property type="project" value="GO_Central"/>
</dbReference>
<dbReference type="GO" id="GO:0005262">
    <property type="term" value="F:calcium channel activity"/>
    <property type="evidence" value="ECO:0000318"/>
    <property type="project" value="GO_Central"/>
</dbReference>
<dbReference type="GO" id="GO:0008273">
    <property type="term" value="F:calcium, potassium:sodium antiporter activity"/>
    <property type="evidence" value="ECO:0000316"/>
    <property type="project" value="ARUK-UCL"/>
</dbReference>
<dbReference type="GO" id="GO:0015293">
    <property type="term" value="F:symporter activity"/>
    <property type="evidence" value="ECO:0007669"/>
    <property type="project" value="UniProtKB-KW"/>
</dbReference>
<dbReference type="GO" id="GO:0098703">
    <property type="term" value="P:calcium ion import across plasma membrane"/>
    <property type="evidence" value="ECO:0000314"/>
    <property type="project" value="ARUK-UCL"/>
</dbReference>
<dbReference type="GO" id="GO:0070588">
    <property type="term" value="P:calcium ion transmembrane transport"/>
    <property type="evidence" value="ECO:0000318"/>
    <property type="project" value="GO_Central"/>
</dbReference>
<dbReference type="GO" id="GO:0006874">
    <property type="term" value="P:intracellular calcium ion homeostasis"/>
    <property type="evidence" value="ECO:0000318"/>
    <property type="project" value="GO_Central"/>
</dbReference>
<dbReference type="GO" id="GO:0060292">
    <property type="term" value="P:long-term synaptic depression"/>
    <property type="evidence" value="ECO:0000318"/>
    <property type="project" value="GO_Central"/>
</dbReference>
<dbReference type="GO" id="GO:0060291">
    <property type="term" value="P:long-term synaptic potentiation"/>
    <property type="evidence" value="ECO:0000318"/>
    <property type="project" value="GO_Central"/>
</dbReference>
<dbReference type="GO" id="GO:0007601">
    <property type="term" value="P:visual perception"/>
    <property type="evidence" value="ECO:0007669"/>
    <property type="project" value="UniProtKB-KW"/>
</dbReference>
<dbReference type="FunFam" id="1.20.1420.30:FF:000002">
    <property type="entry name" value="Sodium/potassium/calcium exchanger 2 isoform 1"/>
    <property type="match status" value="1"/>
</dbReference>
<dbReference type="FunFam" id="1.20.1420.30:FF:000004">
    <property type="entry name" value="Sodium/potassium/calcium exchanger 2 isoform 1"/>
    <property type="match status" value="1"/>
</dbReference>
<dbReference type="Gene3D" id="1.20.1420.30">
    <property type="entry name" value="NCX, central ion-binding region"/>
    <property type="match status" value="2"/>
</dbReference>
<dbReference type="InterPro" id="IPR004481">
    <property type="entry name" value="K/Na/Ca-exchanger"/>
</dbReference>
<dbReference type="InterPro" id="IPR004837">
    <property type="entry name" value="NaCa_Exmemb"/>
</dbReference>
<dbReference type="InterPro" id="IPR044880">
    <property type="entry name" value="NCX_ion-bd_dom_sf"/>
</dbReference>
<dbReference type="NCBIfam" id="TIGR00367">
    <property type="entry name" value="calcium/sodium antiporter"/>
    <property type="match status" value="1"/>
</dbReference>
<dbReference type="PANTHER" id="PTHR10846">
    <property type="entry name" value="SODIUM/POTASSIUM/CALCIUM EXCHANGER"/>
    <property type="match status" value="1"/>
</dbReference>
<dbReference type="PANTHER" id="PTHR10846:SF36">
    <property type="entry name" value="SODIUM_POTASSIUM_CALCIUM EXCHANGER 1"/>
    <property type="match status" value="1"/>
</dbReference>
<dbReference type="Pfam" id="PF01699">
    <property type="entry name" value="Na_Ca_ex"/>
    <property type="match status" value="2"/>
</dbReference>
<accession>Q9IAL8</accession>
<protein>
    <recommendedName>
        <fullName>Sodium/potassium/calcium exchanger 1</fullName>
    </recommendedName>
    <alternativeName>
        <fullName>Na(+)/K(+)/Ca(2+)-exchange protein 1</fullName>
    </alternativeName>
    <alternativeName>
        <fullName>Retinal rod Na-Ca+K exchanger</fullName>
    </alternativeName>
    <alternativeName>
        <fullName>Solute carrier family 24 member 1</fullName>
    </alternativeName>
</protein>